<feature type="chain" id="PRO_0000288740" description="Small heat shock protein C1">
    <location>
        <begin position="1"/>
        <end position="163"/>
    </location>
</feature>
<feature type="domain" description="sHSP" evidence="1">
    <location>
        <begin position="55"/>
        <end position="163"/>
    </location>
</feature>
<evidence type="ECO:0000255" key="1">
    <source>
        <dbReference type="PROSITE-ProRule" id="PRU00285"/>
    </source>
</evidence>
<protein>
    <recommendedName>
        <fullName>Small heat shock protein C1</fullName>
    </recommendedName>
</protein>
<accession>Q68X97</accession>
<reference key="1">
    <citation type="journal article" date="2004" name="J. Bacteriol.">
        <title>Complete genome sequence of Rickettsia typhi and comparison with sequences of other Rickettsiae.</title>
        <authorList>
            <person name="McLeod M.P."/>
            <person name="Qin X."/>
            <person name="Karpathy S.E."/>
            <person name="Gioia J."/>
            <person name="Highlander S.K."/>
            <person name="Fox G.E."/>
            <person name="McNeill T.Z."/>
            <person name="Jiang H."/>
            <person name="Muzny D."/>
            <person name="Jacob L.S."/>
            <person name="Hawes A.C."/>
            <person name="Sodergren E."/>
            <person name="Gill R."/>
            <person name="Hume J."/>
            <person name="Morgan M."/>
            <person name="Fan G."/>
            <person name="Amin A.G."/>
            <person name="Gibbs R.A."/>
            <person name="Hong C."/>
            <person name="Yu X.-J."/>
            <person name="Walker D.H."/>
            <person name="Weinstock G.M."/>
        </authorList>
    </citation>
    <scope>NUCLEOTIDE SEQUENCE [LARGE SCALE GENOMIC DNA]</scope>
    <source>
        <strain>ATCC VR-144 / Wilmington</strain>
    </source>
</reference>
<proteinExistence type="inferred from homology"/>
<sequence>MLKYIPAIFAIILSSNIAIASKNYDYINATPLRQVADLIDSHITNIDHLFNNRLMFYESSSIKSKFITKDKQYVIIMEVPGFDKNQIKVKLNGKKLFIAGNIEEKNKANDSDNYMNKNFNYVISLYEDVDQTNISARLKNGILTIILPRIEVKEQDAKEITIN</sequence>
<comment type="similarity">
    <text evidence="1">Belongs to the small heat shock protein (HSP20) family.</text>
</comment>
<keyword id="KW-0346">Stress response</keyword>
<name>HSPC1_RICTY</name>
<dbReference type="EMBL" id="AE017197">
    <property type="protein sequence ID" value="AAU03745.1"/>
    <property type="molecule type" value="Genomic_DNA"/>
</dbReference>
<dbReference type="RefSeq" id="WP_011190730.1">
    <property type="nucleotide sequence ID" value="NC_006142.1"/>
</dbReference>
<dbReference type="SMR" id="Q68X97"/>
<dbReference type="KEGG" id="rty:RT0264"/>
<dbReference type="eggNOG" id="COG0071">
    <property type="taxonomic scope" value="Bacteria"/>
</dbReference>
<dbReference type="HOGENOM" id="CLU_135634_0_0_5"/>
<dbReference type="OrthoDB" id="9808910at2"/>
<dbReference type="Proteomes" id="UP000000604">
    <property type="component" value="Chromosome"/>
</dbReference>
<dbReference type="CDD" id="cd06464">
    <property type="entry name" value="ACD_sHsps-like"/>
    <property type="match status" value="1"/>
</dbReference>
<dbReference type="Gene3D" id="2.60.40.790">
    <property type="match status" value="1"/>
</dbReference>
<dbReference type="InterPro" id="IPR002068">
    <property type="entry name" value="A-crystallin/Hsp20_dom"/>
</dbReference>
<dbReference type="InterPro" id="IPR008978">
    <property type="entry name" value="HSP20-like_chaperone"/>
</dbReference>
<dbReference type="InterPro" id="IPR031107">
    <property type="entry name" value="Small_HSP"/>
</dbReference>
<dbReference type="PANTHER" id="PTHR11527">
    <property type="entry name" value="HEAT-SHOCK PROTEIN 20 FAMILY MEMBER"/>
    <property type="match status" value="1"/>
</dbReference>
<dbReference type="Pfam" id="PF00011">
    <property type="entry name" value="HSP20"/>
    <property type="match status" value="1"/>
</dbReference>
<dbReference type="SUPFAM" id="SSF49764">
    <property type="entry name" value="HSP20-like chaperones"/>
    <property type="match status" value="1"/>
</dbReference>
<dbReference type="PROSITE" id="PS01031">
    <property type="entry name" value="SHSP"/>
    <property type="match status" value="1"/>
</dbReference>
<gene>
    <name type="primary">hspC1</name>
    <name type="ordered locus">RT0264</name>
</gene>
<organism>
    <name type="scientific">Rickettsia typhi (strain ATCC VR-144 / Wilmington)</name>
    <dbReference type="NCBI Taxonomy" id="257363"/>
    <lineage>
        <taxon>Bacteria</taxon>
        <taxon>Pseudomonadati</taxon>
        <taxon>Pseudomonadota</taxon>
        <taxon>Alphaproteobacteria</taxon>
        <taxon>Rickettsiales</taxon>
        <taxon>Rickettsiaceae</taxon>
        <taxon>Rickettsieae</taxon>
        <taxon>Rickettsia</taxon>
        <taxon>typhus group</taxon>
    </lineage>
</organism>